<evidence type="ECO:0000255" key="1">
    <source>
        <dbReference type="HAMAP-Rule" id="MF_01197"/>
    </source>
</evidence>
<evidence type="ECO:0000256" key="2">
    <source>
        <dbReference type="SAM" id="MobiDB-lite"/>
    </source>
</evidence>
<protein>
    <recommendedName>
        <fullName evidence="1">Cell division protein SepF</fullName>
    </recommendedName>
</protein>
<dbReference type="EMBL" id="CP000117">
    <property type="protein sequence ID" value="ABA22511.1"/>
    <property type="molecule type" value="Genomic_DNA"/>
</dbReference>
<dbReference type="SMR" id="Q3M925"/>
<dbReference type="STRING" id="240292.Ava_2900"/>
<dbReference type="KEGG" id="ava:Ava_2900"/>
<dbReference type="eggNOG" id="COG1799">
    <property type="taxonomic scope" value="Bacteria"/>
</dbReference>
<dbReference type="HOGENOM" id="CLU_078499_1_1_3"/>
<dbReference type="Proteomes" id="UP000002533">
    <property type="component" value="Chromosome"/>
</dbReference>
<dbReference type="GO" id="GO:0005737">
    <property type="term" value="C:cytoplasm"/>
    <property type="evidence" value="ECO:0007669"/>
    <property type="project" value="UniProtKB-SubCell"/>
</dbReference>
<dbReference type="GO" id="GO:0000917">
    <property type="term" value="P:division septum assembly"/>
    <property type="evidence" value="ECO:0007669"/>
    <property type="project" value="UniProtKB-KW"/>
</dbReference>
<dbReference type="GO" id="GO:0043093">
    <property type="term" value="P:FtsZ-dependent cytokinesis"/>
    <property type="evidence" value="ECO:0007669"/>
    <property type="project" value="UniProtKB-UniRule"/>
</dbReference>
<dbReference type="Gene3D" id="3.30.110.150">
    <property type="entry name" value="SepF-like protein"/>
    <property type="match status" value="1"/>
</dbReference>
<dbReference type="HAMAP" id="MF_01197">
    <property type="entry name" value="SepF"/>
    <property type="match status" value="1"/>
</dbReference>
<dbReference type="InterPro" id="IPR023052">
    <property type="entry name" value="Cell_div_SepF"/>
</dbReference>
<dbReference type="InterPro" id="IPR007561">
    <property type="entry name" value="Cell_div_SepF/SepF-rel"/>
</dbReference>
<dbReference type="InterPro" id="IPR038594">
    <property type="entry name" value="SepF-like_sf"/>
</dbReference>
<dbReference type="PANTHER" id="PTHR35798">
    <property type="entry name" value="CELL DIVISION PROTEIN SEPF"/>
    <property type="match status" value="1"/>
</dbReference>
<dbReference type="PANTHER" id="PTHR35798:SF1">
    <property type="entry name" value="CELL DIVISION PROTEIN SEPF"/>
    <property type="match status" value="1"/>
</dbReference>
<dbReference type="Pfam" id="PF04472">
    <property type="entry name" value="SepF"/>
    <property type="match status" value="1"/>
</dbReference>
<accession>Q3M925</accession>
<gene>
    <name evidence="1" type="primary">sepF</name>
    <name type="ordered locus">Ava_2900</name>
</gene>
<reference key="1">
    <citation type="journal article" date="2014" name="Stand. Genomic Sci.">
        <title>Complete genome sequence of Anabaena variabilis ATCC 29413.</title>
        <authorList>
            <person name="Thiel T."/>
            <person name="Pratte B.S."/>
            <person name="Zhong J."/>
            <person name="Goodwin L."/>
            <person name="Copeland A."/>
            <person name="Lucas S."/>
            <person name="Han C."/>
            <person name="Pitluck S."/>
            <person name="Land M.L."/>
            <person name="Kyrpides N.C."/>
            <person name="Woyke T."/>
        </authorList>
    </citation>
    <scope>NUCLEOTIDE SEQUENCE [LARGE SCALE GENOMIC DNA]</scope>
    <source>
        <strain>ATCC 29413 / PCC 7937</strain>
    </source>
</reference>
<proteinExistence type="inferred from homology"/>
<comment type="function">
    <text evidence="1">Cell division protein that is part of the divisome complex and is recruited early to the Z-ring. Probably stimulates Z-ring formation, perhaps through the cross-linking of FtsZ protofilaments. Its function overlaps with FtsA.</text>
</comment>
<comment type="subunit">
    <text evidence="1">Homodimer. Interacts with FtsZ.</text>
</comment>
<comment type="subcellular location">
    <subcellularLocation>
        <location evidence="1">Cytoplasm</location>
    </subcellularLocation>
    <text evidence="1">Localizes to the division site, in a FtsZ-dependent manner.</text>
</comment>
<comment type="similarity">
    <text evidence="1">Belongs to the SepF family.</text>
</comment>
<sequence length="198" mass="21937">MNNIFSKLRDFVGLNEQVEYEYYEEEADTDNYQNLYQQENPQPAPAEAAPNNRRWREPMTTMGDDVATGTKSAMGNVIGMPGAINGISEVLVLEPRTFEEMPQAIQALRERKSVVLNLTIMDPDQAQRAVDFVAGGTYALDGHQERIGESIFLFTPSCVQVSTQGGVIHEVPQPPARPARPASTNPPAWGNETNRMAQ</sequence>
<keyword id="KW-0131">Cell cycle</keyword>
<keyword id="KW-0132">Cell division</keyword>
<keyword id="KW-0963">Cytoplasm</keyword>
<keyword id="KW-0717">Septation</keyword>
<name>SEPF_TRIV2</name>
<organism>
    <name type="scientific">Trichormus variabilis (strain ATCC 29413 / PCC 7937)</name>
    <name type="common">Anabaena variabilis</name>
    <dbReference type="NCBI Taxonomy" id="240292"/>
    <lineage>
        <taxon>Bacteria</taxon>
        <taxon>Bacillati</taxon>
        <taxon>Cyanobacteriota</taxon>
        <taxon>Cyanophyceae</taxon>
        <taxon>Nostocales</taxon>
        <taxon>Nostocaceae</taxon>
        <taxon>Trichormus</taxon>
    </lineage>
</organism>
<feature type="chain" id="PRO_0000333971" description="Cell division protein SepF">
    <location>
        <begin position="1"/>
        <end position="198"/>
    </location>
</feature>
<feature type="region of interest" description="Disordered" evidence="2">
    <location>
        <begin position="170"/>
        <end position="198"/>
    </location>
</feature>
<feature type="compositionally biased region" description="Low complexity" evidence="2">
    <location>
        <begin position="179"/>
        <end position="188"/>
    </location>
</feature>